<organism>
    <name type="scientific">Methylorubrum extorquens (strain PA1)</name>
    <name type="common">Methylobacterium extorquens</name>
    <dbReference type="NCBI Taxonomy" id="419610"/>
    <lineage>
        <taxon>Bacteria</taxon>
        <taxon>Pseudomonadati</taxon>
        <taxon>Pseudomonadota</taxon>
        <taxon>Alphaproteobacteria</taxon>
        <taxon>Hyphomicrobiales</taxon>
        <taxon>Methylobacteriaceae</taxon>
        <taxon>Methylorubrum</taxon>
    </lineage>
</organism>
<accession>A9W3R0</accession>
<comment type="function">
    <text evidence="1">Catalyzes the cross-linking of a glutamate residue and a tyrosine residue in the PqqA protein as part of the biosynthesis of pyrroloquinoline quinone (PQQ).</text>
</comment>
<comment type="catalytic activity">
    <reaction evidence="1">
        <text>[PQQ precursor protein] + S-adenosyl-L-methionine = E-Y cross-linked-[PQQ precursor protein] + 5'-deoxyadenosine + L-methionine + H(+)</text>
        <dbReference type="Rhea" id="RHEA:56836"/>
        <dbReference type="Rhea" id="RHEA-COMP:14800"/>
        <dbReference type="Rhea" id="RHEA-COMP:14801"/>
        <dbReference type="ChEBI" id="CHEBI:15378"/>
        <dbReference type="ChEBI" id="CHEBI:17319"/>
        <dbReference type="ChEBI" id="CHEBI:57844"/>
        <dbReference type="ChEBI" id="CHEBI:59789"/>
        <dbReference type="ChEBI" id="CHEBI:141026"/>
        <dbReference type="ChEBI" id="CHEBI:141027"/>
        <dbReference type="EC" id="1.21.98.4"/>
    </reaction>
</comment>
<comment type="cofactor">
    <cofactor evidence="1">
        <name>[4Fe-4S] cluster</name>
        <dbReference type="ChEBI" id="CHEBI:49883"/>
    </cofactor>
    <text evidence="1">Binds 1 [4Fe-4S] cluster. The cluster is coordinated with 3 cysteines and an exchangeable S-adenosyl-L-methionine.</text>
</comment>
<comment type="pathway">
    <text evidence="1">Cofactor biosynthesis; pyrroloquinoline quinone biosynthesis.</text>
</comment>
<comment type="subunit">
    <text evidence="1">Interacts with PqqD. The interaction is necessary for activity of PqqE.</text>
</comment>
<comment type="similarity">
    <text evidence="1">Belongs to the radical SAM superfamily. PqqE family.</text>
</comment>
<evidence type="ECO:0000255" key="1">
    <source>
        <dbReference type="HAMAP-Rule" id="MF_00660"/>
    </source>
</evidence>
<evidence type="ECO:0000255" key="2">
    <source>
        <dbReference type="PROSITE-ProRule" id="PRU01266"/>
    </source>
</evidence>
<dbReference type="EC" id="1.21.98.4" evidence="1"/>
<dbReference type="EMBL" id="CP000908">
    <property type="protein sequence ID" value="ABY30216.1"/>
    <property type="molecule type" value="Genomic_DNA"/>
</dbReference>
<dbReference type="RefSeq" id="WP_012253377.1">
    <property type="nucleotide sequence ID" value="NC_010172.1"/>
</dbReference>
<dbReference type="SMR" id="A9W3R0"/>
<dbReference type="GeneID" id="72989474"/>
<dbReference type="KEGG" id="mex:Mext_1817"/>
<dbReference type="eggNOG" id="COG0535">
    <property type="taxonomic scope" value="Bacteria"/>
</dbReference>
<dbReference type="HOGENOM" id="CLU_009273_4_7_5"/>
<dbReference type="BioCyc" id="MEXT419610:MEXT_RS09205-MONOMER"/>
<dbReference type="UniPathway" id="UPA00539"/>
<dbReference type="GO" id="GO:0051539">
    <property type="term" value="F:4 iron, 4 sulfur cluster binding"/>
    <property type="evidence" value="ECO:0007669"/>
    <property type="project" value="UniProtKB-KW"/>
</dbReference>
<dbReference type="GO" id="GO:0009975">
    <property type="term" value="F:cyclase activity"/>
    <property type="evidence" value="ECO:0007669"/>
    <property type="project" value="UniProtKB-UniRule"/>
</dbReference>
<dbReference type="GO" id="GO:0005506">
    <property type="term" value="F:iron ion binding"/>
    <property type="evidence" value="ECO:0007669"/>
    <property type="project" value="UniProtKB-UniRule"/>
</dbReference>
<dbReference type="GO" id="GO:0016491">
    <property type="term" value="F:oxidoreductase activity"/>
    <property type="evidence" value="ECO:0007669"/>
    <property type="project" value="UniProtKB-KW"/>
</dbReference>
<dbReference type="GO" id="GO:1904047">
    <property type="term" value="F:S-adenosyl-L-methionine binding"/>
    <property type="evidence" value="ECO:0007669"/>
    <property type="project" value="UniProtKB-UniRule"/>
</dbReference>
<dbReference type="GO" id="GO:0018189">
    <property type="term" value="P:pyrroloquinoline quinone biosynthetic process"/>
    <property type="evidence" value="ECO:0007669"/>
    <property type="project" value="UniProtKB-UniRule"/>
</dbReference>
<dbReference type="CDD" id="cd01335">
    <property type="entry name" value="Radical_SAM"/>
    <property type="match status" value="1"/>
</dbReference>
<dbReference type="CDD" id="cd21119">
    <property type="entry name" value="SPASM_PqqE"/>
    <property type="match status" value="1"/>
</dbReference>
<dbReference type="Gene3D" id="3.20.20.70">
    <property type="entry name" value="Aldolase class I"/>
    <property type="match status" value="1"/>
</dbReference>
<dbReference type="HAMAP" id="MF_00660">
    <property type="entry name" value="PqqE"/>
    <property type="match status" value="1"/>
</dbReference>
<dbReference type="InterPro" id="IPR023885">
    <property type="entry name" value="4Fe4S-binding_SPASM_dom"/>
</dbReference>
<dbReference type="InterPro" id="IPR013785">
    <property type="entry name" value="Aldolase_TIM"/>
</dbReference>
<dbReference type="InterPro" id="IPR000385">
    <property type="entry name" value="MoaA_NifB_PqqE_Fe-S-bd_CS"/>
</dbReference>
<dbReference type="InterPro" id="IPR011843">
    <property type="entry name" value="PQQ_synth_PqqE_bac"/>
</dbReference>
<dbReference type="InterPro" id="IPR017200">
    <property type="entry name" value="PqqE-like"/>
</dbReference>
<dbReference type="InterPro" id="IPR050377">
    <property type="entry name" value="Radical_SAM_PqqE_MftC-like"/>
</dbReference>
<dbReference type="InterPro" id="IPR007197">
    <property type="entry name" value="rSAM"/>
</dbReference>
<dbReference type="NCBIfam" id="TIGR02109">
    <property type="entry name" value="PQQ_syn_pqqE"/>
    <property type="match status" value="1"/>
</dbReference>
<dbReference type="NCBIfam" id="TIGR04085">
    <property type="entry name" value="rSAM_more_4Fe4S"/>
    <property type="match status" value="1"/>
</dbReference>
<dbReference type="PANTHER" id="PTHR11228:SF7">
    <property type="entry name" value="PQQA PEPTIDE CYCLASE"/>
    <property type="match status" value="1"/>
</dbReference>
<dbReference type="PANTHER" id="PTHR11228">
    <property type="entry name" value="RADICAL SAM DOMAIN PROTEIN"/>
    <property type="match status" value="1"/>
</dbReference>
<dbReference type="Pfam" id="PF04055">
    <property type="entry name" value="Radical_SAM"/>
    <property type="match status" value="1"/>
</dbReference>
<dbReference type="Pfam" id="PF13186">
    <property type="entry name" value="SPASM"/>
    <property type="match status" value="1"/>
</dbReference>
<dbReference type="PIRSF" id="PIRSF037420">
    <property type="entry name" value="PQQ_syn_pqqE"/>
    <property type="match status" value="1"/>
</dbReference>
<dbReference type="SFLD" id="SFLDF00280">
    <property type="entry name" value="coenzyme_PQQ_synthesis_protein"/>
    <property type="match status" value="1"/>
</dbReference>
<dbReference type="SFLD" id="SFLDG01067">
    <property type="entry name" value="SPASM/twitch_domain_containing"/>
    <property type="match status" value="1"/>
</dbReference>
<dbReference type="SUPFAM" id="SSF102114">
    <property type="entry name" value="Radical SAM enzymes"/>
    <property type="match status" value="1"/>
</dbReference>
<dbReference type="PROSITE" id="PS01305">
    <property type="entry name" value="MOAA_NIFB_PQQE"/>
    <property type="match status" value="1"/>
</dbReference>
<dbReference type="PROSITE" id="PS51918">
    <property type="entry name" value="RADICAL_SAM"/>
    <property type="match status" value="1"/>
</dbReference>
<sequence>MNAPTPAPSPVDVIPAPVGLLAELTHRCPLRCPYCSNPLELDRRSAELDTQTWLRVLTEAAGLGVLHVHLSGGEPTARPDIVEITAKCAELGLYSNLITSGVGGALAKLDALYDVGLDHVQLSVQGVDAANAEKIGGLKNAQPQKMQFAARVTELGLPLTLNSVIHRGNIHEVPGFIDLAVKLGAKRLEVAHTQYYGWAYVNRAALMPDKSQVDESIRIVEAARERLKGQLVIDLVVPDYYAKYPKACAGGWGRKLMNVTPQGKVLPCHAAETIPGLEFWYVTDHSLGEIWTQSPAFAAYRGTSWMKEPCRSCDRREKDWGGCRCQALALTGDAANTDPACSLSPLHAKMRDLAKEEAAETPPDYIYRSIGTNVQNPLSEKAPL</sequence>
<gene>
    <name evidence="1" type="primary">pqqE</name>
    <name type="ordered locus">Mext_1817</name>
</gene>
<keyword id="KW-0004">4Fe-4S</keyword>
<keyword id="KW-0408">Iron</keyword>
<keyword id="KW-0411">Iron-sulfur</keyword>
<keyword id="KW-0479">Metal-binding</keyword>
<keyword id="KW-0560">Oxidoreductase</keyword>
<keyword id="KW-0884">PQQ biosynthesis</keyword>
<keyword id="KW-0949">S-adenosyl-L-methionine</keyword>
<feature type="chain" id="PRO_1000131277" description="PqqA peptide cyclase">
    <location>
        <begin position="1"/>
        <end position="384"/>
    </location>
</feature>
<feature type="domain" description="Radical SAM core" evidence="2">
    <location>
        <begin position="14"/>
        <end position="230"/>
    </location>
</feature>
<feature type="binding site" evidence="1">
    <location>
        <position position="28"/>
    </location>
    <ligand>
        <name>[4Fe-4S] cluster</name>
        <dbReference type="ChEBI" id="CHEBI:49883"/>
        <note>4Fe-4S-S-AdoMet</note>
    </ligand>
</feature>
<feature type="binding site" evidence="1">
    <location>
        <position position="32"/>
    </location>
    <ligand>
        <name>[4Fe-4S] cluster</name>
        <dbReference type="ChEBI" id="CHEBI:49883"/>
        <note>4Fe-4S-S-AdoMet</note>
    </ligand>
</feature>
<feature type="binding site" evidence="1">
    <location>
        <position position="35"/>
    </location>
    <ligand>
        <name>[4Fe-4S] cluster</name>
        <dbReference type="ChEBI" id="CHEBI:49883"/>
        <note>4Fe-4S-S-AdoMet</note>
    </ligand>
</feature>
<name>PQQE_METEP</name>
<reference key="1">
    <citation type="submission" date="2007-12" db="EMBL/GenBank/DDBJ databases">
        <title>Complete sequence of Methylobacterium extorquens PA1.</title>
        <authorList>
            <consortium name="US DOE Joint Genome Institute"/>
            <person name="Copeland A."/>
            <person name="Lucas S."/>
            <person name="Lapidus A."/>
            <person name="Barry K."/>
            <person name="Glavina del Rio T."/>
            <person name="Dalin E."/>
            <person name="Tice H."/>
            <person name="Pitluck S."/>
            <person name="Saunders E."/>
            <person name="Brettin T."/>
            <person name="Bruce D."/>
            <person name="Detter J.C."/>
            <person name="Han C."/>
            <person name="Schmutz J."/>
            <person name="Larimer F."/>
            <person name="Land M."/>
            <person name="Hauser L."/>
            <person name="Kyrpides N."/>
            <person name="Kim E."/>
            <person name="Marx C."/>
            <person name="Richardson P."/>
        </authorList>
    </citation>
    <scope>NUCLEOTIDE SEQUENCE [LARGE SCALE GENOMIC DNA]</scope>
    <source>
        <strain>PA1</strain>
    </source>
</reference>
<protein>
    <recommendedName>
        <fullName evidence="1">PqqA peptide cyclase</fullName>
        <ecNumber evidence="1">1.21.98.4</ecNumber>
    </recommendedName>
    <alternativeName>
        <fullName evidence="1">Coenzyme PQQ synthesis protein E</fullName>
    </alternativeName>
    <alternativeName>
        <fullName evidence="1">Pyrroloquinoline quinone biosynthesis protein E</fullName>
    </alternativeName>
</protein>
<proteinExistence type="inferred from homology"/>